<organism>
    <name type="scientific">Macrophomina phaseolina (strain MS6)</name>
    <name type="common">Charcoal rot fungus</name>
    <dbReference type="NCBI Taxonomy" id="1126212"/>
    <lineage>
        <taxon>Eukaryota</taxon>
        <taxon>Fungi</taxon>
        <taxon>Dikarya</taxon>
        <taxon>Ascomycota</taxon>
        <taxon>Pezizomycotina</taxon>
        <taxon>Dothideomycetes</taxon>
        <taxon>Dothideomycetes incertae sedis</taxon>
        <taxon>Botryosphaeriales</taxon>
        <taxon>Botryosphaeriaceae</taxon>
        <taxon>Macrophomina</taxon>
    </lineage>
</organism>
<evidence type="ECO:0000269" key="1">
    <source>
    </source>
</evidence>
<evidence type="ECO:0000303" key="2">
    <source>
    </source>
</evidence>
<evidence type="ECO:0000305" key="3"/>
<reference key="1">
    <citation type="journal article" date="2012" name="BMC Genomics">
        <title>Tools to kill: Genome of one of the most destructive plant pathogenic fungi Macrophomina phaseolina.</title>
        <authorList>
            <person name="Islam M.S."/>
            <person name="Haque M.S."/>
            <person name="Islam M.M."/>
            <person name="Emdad E.M."/>
            <person name="Halim A."/>
            <person name="Hossen Q.M.M."/>
            <person name="Hossain M.Z."/>
            <person name="Ahmed B."/>
            <person name="Rahim S."/>
            <person name="Rahman M.S."/>
            <person name="Alam M.M."/>
            <person name="Hou S."/>
            <person name="Wan X."/>
            <person name="Saito J.A."/>
            <person name="Alam M."/>
        </authorList>
    </citation>
    <scope>NUCLEOTIDE SEQUENCE [LARGE SCALE GENOMIC DNA]</scope>
    <source>
        <strain>MS6</strain>
    </source>
</reference>
<reference key="2">
    <citation type="journal article" date="2022" name="Front. Microbiol.">
        <title>Discovery and biosynthesis of macrophasetins from the plant pathogen fungus Macrophomina phaseolina.</title>
        <authorList>
            <person name="Yu C."/>
            <person name="Chen L."/>
            <person name="Gao Y.L."/>
            <person name="Liu J."/>
            <person name="Li P.L."/>
            <person name="Zhang M.L."/>
            <person name="Li Q."/>
            <person name="Zhang H.D."/>
            <person name="Tang M.C."/>
            <person name="Li L."/>
        </authorList>
    </citation>
    <scope>FUNCTION</scope>
    <scope>CATALYTIC ACTIVITY</scope>
    <scope>PATHWAY</scope>
</reference>
<comment type="function">
    <text evidence="1">Diels-Alderase; part of the gene cluster that mediates the biosynthesis of macrophasetins, 3-decalinoyltetramic acids (DTAs) which feature a tetramate (pyrrolidine-2,4-dione) unit connected to a decalin fragment and that have potent bioactivities (PubMed:36452919). The PKS-NRPS mpsA together with its associated enoylreductase partner mpsG incorporate one unit of acetyl-CoA, seven units of malonyl-CoA, and one unit of L-alanine to assemble the linear tetramic acid intermediate corresponding to the backbone of macrophasetins (PubMed:36452919). Without the Diels-Alderase mpsD, the mpsA/G product can undergo the non-enzymatic intramolecular Diels-Alder (IMDA) reaction to generate both macrophasetin A and macrophasetin B (PubMed:36452919). Catalyzed by mpsD, the linear tetramic acid intermediate is thoroughly converted to macrophasetin A via the endo-IMDA reaction in a regioselective and stereoselective manner (PubMed:36452919). Finally, the cytochrome P450 monooxygenase mpsF catalyzes the hydroxylation at C20 to yield the end product macrophasetin C (PubMed:36452919).</text>
</comment>
<comment type="pathway">
    <text evidence="1">Secondary metabolite biosynthesis.</text>
</comment>
<comment type="similarity">
    <text evidence="3">Belongs to the Diels-Alderase family.</text>
</comment>
<protein>
    <recommendedName>
        <fullName evidence="2">Diels-Alderase mpsD</fullName>
        <ecNumber evidence="1">5.5.1.-</ecNumber>
    </recommendedName>
    <alternativeName>
        <fullName evidence="2">Macrophasetins biosynthesis cluster protein D</fullName>
    </alternativeName>
</protein>
<proteinExistence type="evidence at protein level"/>
<gene>
    <name evidence="2" type="primary">mpsD</name>
    <name type="ORF">MPH_07627</name>
</gene>
<name>MPSD_MACPH</name>
<dbReference type="EC" id="5.5.1.-" evidence="1"/>
<dbReference type="EMBL" id="AHHD01000324">
    <property type="protein sequence ID" value="EKG15180.1"/>
    <property type="molecule type" value="Genomic_DNA"/>
</dbReference>
<dbReference type="SMR" id="K2SE88"/>
<dbReference type="STRING" id="1126212.K2SE88"/>
<dbReference type="VEuPathDB" id="FungiDB:MPH_07627"/>
<dbReference type="eggNOG" id="ENOG502SK1F">
    <property type="taxonomic scope" value="Eukaryota"/>
</dbReference>
<dbReference type="HOGENOM" id="CLU_041924_2_0_1"/>
<dbReference type="InParanoid" id="K2SE88"/>
<dbReference type="OrthoDB" id="5344254at2759"/>
<dbReference type="Proteomes" id="UP000007129">
    <property type="component" value="Unassembled WGS sequence"/>
</dbReference>
<dbReference type="GO" id="GO:0016853">
    <property type="term" value="F:isomerase activity"/>
    <property type="evidence" value="ECO:0007669"/>
    <property type="project" value="UniProtKB-KW"/>
</dbReference>
<dbReference type="InterPro" id="IPR054499">
    <property type="entry name" value="DA_C"/>
</dbReference>
<dbReference type="Pfam" id="PF22903">
    <property type="entry name" value="DA_C"/>
    <property type="match status" value="1"/>
</dbReference>
<dbReference type="Pfam" id="PF24137">
    <property type="entry name" value="DA_N"/>
    <property type="match status" value="1"/>
</dbReference>
<feature type="chain" id="PRO_0000457826" description="Diels-Alderase mpsD">
    <location>
        <begin position="1"/>
        <end position="396"/>
    </location>
</feature>
<keyword id="KW-0413">Isomerase</keyword>
<keyword id="KW-1185">Reference proteome</keyword>
<sequence>MAHPQSPGEFQILAAEGPTAGAAWTRHSNDAYPKYSALSKTHWEMWMLEGIEQTGNAGVTVTFFIDGSQTFHGNDPLHITFHALLPDGAIEKHHLIAAAVRVRETDASIVLEWPSKENGDGTEANSFSRIEVAQDHSSATATFNVPGAVQGSLALTSYTRSPDPTAGALGPAVSHRQIMTGAHAESDLSFPGSGRRLRFAGKGGHDRCWMEAAFPAILSDTTYVRGHAGPYTFASLGVVSRMGESRGRNCQKFRLLRDGVEVFASKSDTVSLTEDYFVLRSSHGGPVKGPFLDTTTGYRLDFVRPRAGKHWAFEIAHEKVWWSMPLGPPPLVREGNSGFVSKVRGGEVGGDADGETFEGAGDIGQIQMPELSTLVELKTLKAKAAAAATAPAPAEQ</sequence>
<accession>K2SE88</accession>